<accession>Q8IBG1</accession>
<accession>A0A143ZY83</accession>
<accession>C0H4Q3</accession>
<proteinExistence type="evidence at protein level"/>
<gene>
    <name type="ORF">MAL7P1.162</name>
    <name type="ORF">PF3D7_0729900</name>
</gene>
<dbReference type="EMBL" id="AL844506">
    <property type="protein sequence ID" value="CZT62681.1"/>
    <property type="molecule type" value="Genomic_DNA"/>
</dbReference>
<dbReference type="SMR" id="Q8IBG1"/>
<dbReference type="FunCoup" id="Q8IBG1">
    <property type="interactions" value="262"/>
</dbReference>
<dbReference type="STRING" id="36329.A0A143ZY83"/>
<dbReference type="PaxDb" id="5833-MAL7P1.162"/>
<dbReference type="EnsemblProtists" id="CZT62681">
    <property type="protein sequence ID" value="CZT62681"/>
    <property type="gene ID" value="PF3D7_0729900"/>
</dbReference>
<dbReference type="VEuPathDB" id="PlasmoDB:PF3D7_0729900"/>
<dbReference type="InParanoid" id="Q8IBG1"/>
<dbReference type="OMA" id="NERQMTR"/>
<dbReference type="OrthoDB" id="424310at2759"/>
<dbReference type="PhylomeDB" id="Q8IBG1"/>
<dbReference type="Reactome" id="R-PFA-3371497">
    <property type="pathway name" value="HSP90 chaperone cycle for steroid hormone receptors (SHR) in the presence of ligand"/>
</dbReference>
<dbReference type="Reactome" id="R-PFA-6798695">
    <property type="pathway name" value="Neutrophil degranulation"/>
</dbReference>
<dbReference type="Reactome" id="R-PFA-9646399">
    <property type="pathway name" value="Aggrephagy"/>
</dbReference>
<dbReference type="Proteomes" id="UP000001450">
    <property type="component" value="Chromosome 7"/>
</dbReference>
<dbReference type="GO" id="GO:0005938">
    <property type="term" value="C:cell cortex"/>
    <property type="evidence" value="ECO:0000318"/>
    <property type="project" value="GO_Central"/>
</dbReference>
<dbReference type="GO" id="GO:0005868">
    <property type="term" value="C:cytoplasmic dynein complex"/>
    <property type="evidence" value="ECO:0000318"/>
    <property type="project" value="GO_Central"/>
</dbReference>
<dbReference type="GO" id="GO:0005881">
    <property type="term" value="C:cytoplasmic microtubule"/>
    <property type="evidence" value="ECO:0000318"/>
    <property type="project" value="GO_Central"/>
</dbReference>
<dbReference type="GO" id="GO:0005875">
    <property type="term" value="C:microtubule associated complex"/>
    <property type="evidence" value="ECO:0000250"/>
    <property type="project" value="UniProtKB"/>
</dbReference>
<dbReference type="GO" id="GO:0005524">
    <property type="term" value="F:ATP binding"/>
    <property type="evidence" value="ECO:0007669"/>
    <property type="project" value="UniProtKB-KW"/>
</dbReference>
<dbReference type="GO" id="GO:0016887">
    <property type="term" value="F:ATP hydrolysis activity"/>
    <property type="evidence" value="ECO:0007669"/>
    <property type="project" value="InterPro"/>
</dbReference>
<dbReference type="GO" id="GO:0045505">
    <property type="term" value="F:dynein intermediate chain binding"/>
    <property type="evidence" value="ECO:0000318"/>
    <property type="project" value="GO_Central"/>
</dbReference>
<dbReference type="GO" id="GO:0051959">
    <property type="term" value="F:dynein light intermediate chain binding"/>
    <property type="evidence" value="ECO:0000318"/>
    <property type="project" value="GO_Central"/>
</dbReference>
<dbReference type="GO" id="GO:0003777">
    <property type="term" value="F:microtubule motor activity"/>
    <property type="evidence" value="ECO:0000250"/>
    <property type="project" value="UniProtKB"/>
</dbReference>
<dbReference type="GO" id="GO:0008569">
    <property type="term" value="F:minus-end-directed microtubule motor activity"/>
    <property type="evidence" value="ECO:0000318"/>
    <property type="project" value="GO_Central"/>
</dbReference>
<dbReference type="GO" id="GO:0031122">
    <property type="term" value="P:cytoplasmic microtubule organization"/>
    <property type="evidence" value="ECO:0000318"/>
    <property type="project" value="GO_Central"/>
</dbReference>
<dbReference type="GO" id="GO:0007018">
    <property type="term" value="P:microtubule-based movement"/>
    <property type="evidence" value="ECO:0000250"/>
    <property type="project" value="UniProtKB"/>
</dbReference>
<dbReference type="GO" id="GO:0007052">
    <property type="term" value="P:mitotic spindle organization"/>
    <property type="evidence" value="ECO:0000318"/>
    <property type="project" value="GO_Central"/>
</dbReference>
<dbReference type="GO" id="GO:0007097">
    <property type="term" value="P:nuclear migration"/>
    <property type="evidence" value="ECO:0000318"/>
    <property type="project" value="GO_Central"/>
</dbReference>
<dbReference type="CDD" id="cd00009">
    <property type="entry name" value="AAA"/>
    <property type="match status" value="1"/>
</dbReference>
<dbReference type="FunFam" id="1.20.920.20:FF:000002">
    <property type="entry name" value="Cytoplasmic dynein 1 heavy chain"/>
    <property type="match status" value="1"/>
</dbReference>
<dbReference type="FunFam" id="3.40.50.300:FF:000122">
    <property type="entry name" value="Cytoplasmic dynein 1 heavy chain"/>
    <property type="match status" value="1"/>
</dbReference>
<dbReference type="FunFam" id="1.20.140.100:FF:000002">
    <property type="entry name" value="Cytoplasmic dynein heavy chain 1"/>
    <property type="match status" value="1"/>
</dbReference>
<dbReference type="FunFam" id="3.20.180.20:FF:000002">
    <property type="entry name" value="Cytoplasmic dynein heavy chain 1"/>
    <property type="match status" value="1"/>
</dbReference>
<dbReference type="FunFam" id="3.40.50.300:FF:000071">
    <property type="entry name" value="Cytoplasmic dynein heavy chain 1"/>
    <property type="match status" value="1"/>
</dbReference>
<dbReference type="FunFam" id="1.10.8.720:FF:000003">
    <property type="entry name" value="Cytoplasmic dynein heavy chain 2"/>
    <property type="match status" value="1"/>
</dbReference>
<dbReference type="FunFam" id="1.10.287.2620:FF:000008">
    <property type="entry name" value="Dynein heavy chain, cytoplasmic"/>
    <property type="match status" value="1"/>
</dbReference>
<dbReference type="FunFam" id="3.40.50.300:FF:000829">
    <property type="entry name" value="Dynein heavy chain, cytoplasmic"/>
    <property type="match status" value="1"/>
</dbReference>
<dbReference type="FunFam" id="3.10.490.20:FF:000020">
    <property type="entry name" value="Dynein heavy chain, putative"/>
    <property type="match status" value="1"/>
</dbReference>
<dbReference type="FunFam" id="1.10.472.130:FF:000013">
    <property type="entry name" value="Dynein heavy chain-like protein"/>
    <property type="match status" value="1"/>
</dbReference>
<dbReference type="FunFam" id="1.10.8.710:FF:000009">
    <property type="entry name" value="Dynein heavy chain-like protein"/>
    <property type="match status" value="1"/>
</dbReference>
<dbReference type="FunFam" id="1.20.58.1120:FF:000013">
    <property type="entry name" value="Dynein heavy chain-like protein"/>
    <property type="match status" value="1"/>
</dbReference>
<dbReference type="FunFam" id="3.40.50.300:FF:001867">
    <property type="entry name" value="Dynein heavy chain-like protein"/>
    <property type="match status" value="1"/>
</dbReference>
<dbReference type="Gene3D" id="1.10.287.2620">
    <property type="match status" value="1"/>
</dbReference>
<dbReference type="Gene3D" id="1.10.472.130">
    <property type="match status" value="1"/>
</dbReference>
<dbReference type="Gene3D" id="1.10.8.1220">
    <property type="match status" value="1"/>
</dbReference>
<dbReference type="Gene3D" id="1.10.8.710">
    <property type="match status" value="1"/>
</dbReference>
<dbReference type="Gene3D" id="1.20.1270.280">
    <property type="match status" value="1"/>
</dbReference>
<dbReference type="Gene3D" id="1.20.58.1120">
    <property type="match status" value="1"/>
</dbReference>
<dbReference type="Gene3D" id="1.20.920.20">
    <property type="match status" value="1"/>
</dbReference>
<dbReference type="Gene3D" id="1.20.920.30">
    <property type="match status" value="1"/>
</dbReference>
<dbReference type="Gene3D" id="3.10.490.20">
    <property type="match status" value="1"/>
</dbReference>
<dbReference type="Gene3D" id="6.10.140.1060">
    <property type="match status" value="1"/>
</dbReference>
<dbReference type="Gene3D" id="1.20.140.100">
    <property type="entry name" value="Dynein heavy chain, N-terminal domain 2"/>
    <property type="match status" value="1"/>
</dbReference>
<dbReference type="Gene3D" id="3.20.180.20">
    <property type="entry name" value="Dynein heavy chain, N-terminal domain 2"/>
    <property type="match status" value="1"/>
</dbReference>
<dbReference type="Gene3D" id="3.40.50.300">
    <property type="entry name" value="P-loop containing nucleotide triphosphate hydrolases"/>
    <property type="match status" value="5"/>
</dbReference>
<dbReference type="Gene3D" id="1.10.8.720">
    <property type="entry name" value="Region D6 of dynein motor"/>
    <property type="match status" value="1"/>
</dbReference>
<dbReference type="InterPro" id="IPR003593">
    <property type="entry name" value="AAA+_ATPase"/>
</dbReference>
<dbReference type="InterPro" id="IPR035699">
    <property type="entry name" value="AAA_6"/>
</dbReference>
<dbReference type="InterPro" id="IPR035706">
    <property type="entry name" value="AAA_9"/>
</dbReference>
<dbReference type="InterPro" id="IPR041658">
    <property type="entry name" value="AAA_lid_11"/>
</dbReference>
<dbReference type="InterPro" id="IPR042219">
    <property type="entry name" value="AAA_lid_11_sf"/>
</dbReference>
<dbReference type="InterPro" id="IPR026983">
    <property type="entry name" value="DHC"/>
</dbReference>
<dbReference type="InterPro" id="IPR054354">
    <property type="entry name" value="DYNC2H1-like_lid"/>
</dbReference>
<dbReference type="InterPro" id="IPR042222">
    <property type="entry name" value="Dynein_2_N"/>
</dbReference>
<dbReference type="InterPro" id="IPR043157">
    <property type="entry name" value="Dynein_AAA1S"/>
</dbReference>
<dbReference type="InterPro" id="IPR041466">
    <property type="entry name" value="Dynein_AAA5_ext"/>
</dbReference>
<dbReference type="InterPro" id="IPR041228">
    <property type="entry name" value="Dynein_C"/>
</dbReference>
<dbReference type="InterPro" id="IPR043160">
    <property type="entry name" value="Dynein_C_barrel"/>
</dbReference>
<dbReference type="InterPro" id="IPR024743">
    <property type="entry name" value="Dynein_HC_stalk"/>
</dbReference>
<dbReference type="InterPro" id="IPR024317">
    <property type="entry name" value="Dynein_heavy_chain_D4_dom"/>
</dbReference>
<dbReference type="InterPro" id="IPR004273">
    <property type="entry name" value="Dynein_heavy_D6_P-loop"/>
</dbReference>
<dbReference type="InterPro" id="IPR013602">
    <property type="entry name" value="Dynein_heavy_linker"/>
</dbReference>
<dbReference type="InterPro" id="IPR013594">
    <property type="entry name" value="Dynein_heavy_tail"/>
</dbReference>
<dbReference type="InterPro" id="IPR042228">
    <property type="entry name" value="Dynein_linker_3"/>
</dbReference>
<dbReference type="InterPro" id="IPR027417">
    <property type="entry name" value="P-loop_NTPase"/>
</dbReference>
<dbReference type="PANTHER" id="PTHR10676:SF314">
    <property type="entry name" value="CYTOPLASMIC DYNEIN 1 HEAVY CHAIN 1"/>
    <property type="match status" value="1"/>
</dbReference>
<dbReference type="PANTHER" id="PTHR10676">
    <property type="entry name" value="DYNEIN HEAVY CHAIN FAMILY PROTEIN"/>
    <property type="match status" value="1"/>
</dbReference>
<dbReference type="Pfam" id="PF12774">
    <property type="entry name" value="AAA_6"/>
    <property type="match status" value="2"/>
</dbReference>
<dbReference type="Pfam" id="PF12775">
    <property type="entry name" value="AAA_7"/>
    <property type="match status" value="1"/>
</dbReference>
<dbReference type="Pfam" id="PF12780">
    <property type="entry name" value="AAA_8"/>
    <property type="match status" value="1"/>
</dbReference>
<dbReference type="Pfam" id="PF12781">
    <property type="entry name" value="AAA_9"/>
    <property type="match status" value="1"/>
</dbReference>
<dbReference type="Pfam" id="PF18198">
    <property type="entry name" value="AAA_lid_11"/>
    <property type="match status" value="1"/>
</dbReference>
<dbReference type="Pfam" id="PF08385">
    <property type="entry name" value="DHC_N1"/>
    <property type="match status" value="1"/>
</dbReference>
<dbReference type="Pfam" id="PF08393">
    <property type="entry name" value="DHC_N2"/>
    <property type="match status" value="1"/>
</dbReference>
<dbReference type="Pfam" id="PF22597">
    <property type="entry name" value="DYN_lid"/>
    <property type="match status" value="1"/>
</dbReference>
<dbReference type="Pfam" id="PF17852">
    <property type="entry name" value="Dynein_AAA_lid"/>
    <property type="match status" value="1"/>
</dbReference>
<dbReference type="Pfam" id="PF18199">
    <property type="entry name" value="Dynein_C"/>
    <property type="match status" value="2"/>
</dbReference>
<dbReference type="Pfam" id="PF03028">
    <property type="entry name" value="Dynein_heavy"/>
    <property type="match status" value="1"/>
</dbReference>
<dbReference type="Pfam" id="PF12777">
    <property type="entry name" value="MT"/>
    <property type="match status" value="1"/>
</dbReference>
<dbReference type="SMART" id="SM00382">
    <property type="entry name" value="AAA"/>
    <property type="match status" value="3"/>
</dbReference>
<dbReference type="SUPFAM" id="SSF52540">
    <property type="entry name" value="P-loop containing nucleoside triphosphate hydrolases"/>
    <property type="match status" value="4"/>
</dbReference>
<reference key="1">
    <citation type="journal article" date="2002" name="Nature">
        <title>Genome sequence of the human malaria parasite Plasmodium falciparum.</title>
        <authorList>
            <person name="Gardner M.J."/>
            <person name="Hall N."/>
            <person name="Fung E."/>
            <person name="White O."/>
            <person name="Berriman M."/>
            <person name="Hyman R.W."/>
            <person name="Carlton J.M."/>
            <person name="Pain A."/>
            <person name="Nelson K.E."/>
            <person name="Bowman S."/>
            <person name="Paulsen I.T."/>
            <person name="James K.D."/>
            <person name="Eisen J.A."/>
            <person name="Rutherford K.M."/>
            <person name="Salzberg S.L."/>
            <person name="Craig A."/>
            <person name="Kyes S."/>
            <person name="Chan M.-S."/>
            <person name="Nene V."/>
            <person name="Shallom S.J."/>
            <person name="Suh B."/>
            <person name="Peterson J."/>
            <person name="Angiuoli S."/>
            <person name="Pertea M."/>
            <person name="Allen J."/>
            <person name="Selengut J."/>
            <person name="Haft D."/>
            <person name="Mather M.W."/>
            <person name="Vaidya A.B."/>
            <person name="Martin D.M.A."/>
            <person name="Fairlamb A.H."/>
            <person name="Fraunholz M.J."/>
            <person name="Roos D.S."/>
            <person name="Ralph S.A."/>
            <person name="McFadden G.I."/>
            <person name="Cummings L.M."/>
            <person name="Subramanian G.M."/>
            <person name="Mungall C."/>
            <person name="Venter J.C."/>
            <person name="Carucci D.J."/>
            <person name="Hoffman S.L."/>
            <person name="Newbold C."/>
            <person name="Davis R.W."/>
            <person name="Fraser C.M."/>
            <person name="Barrell B.G."/>
        </authorList>
    </citation>
    <scope>NUCLEOTIDE SEQUENCE [LARGE SCALE GENOMIC DNA]</scope>
    <source>
        <strain>3D7</strain>
    </source>
</reference>
<reference key="2">
    <citation type="journal article" date="2002" name="Nature">
        <title>Sequence of Plasmodium falciparum chromosomes 1, 3-9 and 13.</title>
        <authorList>
            <person name="Hall N."/>
            <person name="Pain A."/>
            <person name="Berriman M."/>
            <person name="Churcher C.M."/>
            <person name="Harris B."/>
            <person name="Harris D."/>
            <person name="Mungall K.L."/>
            <person name="Bowman S."/>
            <person name="Atkin R."/>
            <person name="Baker S."/>
            <person name="Barron A."/>
            <person name="Brooks K."/>
            <person name="Buckee C.O."/>
            <person name="Burrows C."/>
            <person name="Cherevach I."/>
            <person name="Chillingworth C."/>
            <person name="Chillingworth T."/>
            <person name="Christodoulou Z."/>
            <person name="Clark L."/>
            <person name="Clark R."/>
            <person name="Corton C."/>
            <person name="Cronin A."/>
            <person name="Davies R.M."/>
            <person name="Davis P."/>
            <person name="Dear P."/>
            <person name="Dearden F."/>
            <person name="Doggett J."/>
            <person name="Feltwell T."/>
            <person name="Goble A."/>
            <person name="Goodhead I."/>
            <person name="Gwilliam R."/>
            <person name="Hamlin N."/>
            <person name="Hance Z."/>
            <person name="Harper D."/>
            <person name="Hauser H."/>
            <person name="Hornsby T."/>
            <person name="Holroyd S."/>
            <person name="Horrocks P."/>
            <person name="Humphray S."/>
            <person name="Jagels K."/>
            <person name="James K.D."/>
            <person name="Johnson D."/>
            <person name="Kerhornou A."/>
            <person name="Knights A."/>
            <person name="Konfortov B."/>
            <person name="Kyes S."/>
            <person name="Larke N."/>
            <person name="Lawson D."/>
            <person name="Lennard N."/>
            <person name="Line A."/>
            <person name="Maddison M."/>
            <person name="Mclean J."/>
            <person name="Mooney P."/>
            <person name="Moule S."/>
            <person name="Murphy L."/>
            <person name="Oliver K."/>
            <person name="Ormond D."/>
            <person name="Price C."/>
            <person name="Quail M.A."/>
            <person name="Rabbinowitsch E."/>
            <person name="Rajandream M.A."/>
            <person name="Rutter S."/>
            <person name="Rutherford K.M."/>
            <person name="Sanders M."/>
            <person name="Simmonds M."/>
            <person name="Seeger K."/>
            <person name="Sharp S."/>
            <person name="Smith R."/>
            <person name="Squares R."/>
            <person name="Squares S."/>
            <person name="Stevens K."/>
            <person name="Taylor K."/>
            <person name="Tivey A."/>
            <person name="Unwin L."/>
            <person name="Whitehead S."/>
            <person name="Woodward J.R."/>
            <person name="Sulston J.E."/>
            <person name="Craig A."/>
            <person name="Newbold C."/>
            <person name="Barrell B.G."/>
        </authorList>
    </citation>
    <scope>NUCLEOTIDE SEQUENCE [LARGE SCALE GENOMIC DNA]</scope>
    <source>
        <strain>3D7</strain>
    </source>
</reference>
<reference evidence="6" key="3">
    <citation type="journal article" date="2007" name="PLoS ONE">
        <title>Rapid identification of malaria vaccine candidates based on alpha-helical coiled coil protein motif.</title>
        <authorList>
            <person name="Villard V."/>
            <person name="Agak G.W."/>
            <person name="Frank G."/>
            <person name="Jafarshad A."/>
            <person name="Servis C."/>
            <person name="Nebie I."/>
            <person name="Sirima S.B."/>
            <person name="Felger I."/>
            <person name="Arevalo-Herrera M."/>
            <person name="Herrera S."/>
            <person name="Heitz F."/>
            <person name="Baecker V."/>
            <person name="Druilhe P."/>
            <person name="Kajava A.V."/>
            <person name="Corradin G."/>
        </authorList>
    </citation>
    <scope>SYNTHESIS OF 1677-1703</scope>
    <scope>DEVELOPMENTAL STAGE</scope>
    <scope>POSSIBLE CANDIDATE MALARIA EPITOPE</scope>
</reference>
<evidence type="ECO:0000250" key="1"/>
<evidence type="ECO:0000250" key="2">
    <source>
        <dbReference type="UniProtKB" id="P34036"/>
    </source>
</evidence>
<evidence type="ECO:0000255" key="3"/>
<evidence type="ECO:0000256" key="4">
    <source>
        <dbReference type="SAM" id="MobiDB-lite"/>
    </source>
</evidence>
<evidence type="ECO:0000269" key="5">
    <source>
    </source>
</evidence>
<evidence type="ECO:0000305" key="6"/>
<sequence length="5065" mass="591698">MELEKTHLINYFLEICPTVLDCSRKELQSVLIKKEEEKIRKFLLDKNINLIVIGKEGNDNVEREMDDKENDNVDINMNEEYNSMRTSNLDNKYNNFLFVELMINYKCVTKSISIAFMKRNKENFLSLNDKIDNRNKINLSNELLMFVCGQNDCNTPLDLVYLYLSQGFNNIFDAASGYGQNISGPDSSHFNYGTKKDVENMFSINNKYIGYEGENKVSNILMNNVSKKLNELLISMKNAQIDLNIPIINLHVDKRIKKLLEENPNVDDMKPDKLKQLCESQEFINQLQKDVTKWIEDIQKLTRLNGEFKSGGSALSEINFWIGYENALYQLESQLKNPEVILTLHILKNAKRYFATMSFDSDIQLKQSKEYVLNVNILMKDFPIEDLLGATSIQQIIQAVRNIFNHLKKLKNTTKYPLSRSYNFVESLSRDLNNTMKKVLCTQSLMNMDYEEFDVLISGCVEIFRLWNEEMRIFKDMVRELIKKRSFNERAPAKMVFEHIHLQERLDEIKKFRKQHEKFKSVISTVFGSNNKSLGINLYKDINTAYNIFLSLDPLDLSKNGEDNWEKAKLSYESKVNRVESQITFKLRDQLGGSKTSAEMFHAFSKFNPLFFRPKIRGAIQEYQNTLIQIVVDDLRKLQMIYINGYLKSDSQKVSTIRDIPLVAGSIIWAKQIERKLEDSLKRIENVLGRGWEQHSEGKILRQNIDNFKNLLSQNKTFEKWLKNIKSADKFDMYDNIINIKKLGGNNYEILANYDFQFFNIFKEVRYLQSINLRVPYSIKVKADETKLIYPYALTLQKTFRTYMKICISMDNQAKDVPFNQTIKKLVAAIHNTVQNKIKEGIYLHWDSDIIETYVRKLSETINTFEFMVDEAMNKNKIVLDSLEKMKTCEVCFDCNELKSLIEIIQKKADELYLEHYRNVHIWIEELNIHINKILTERLEEIIKTWTCEFVNWPNNGKRFICKENIHEFKIKNQKFYLHPSIDSMRQIWFSKLSDAINIICGITRIKNIYQKKEKTNEKIQIKSKGKNTNNEKDDDYIYYTNDSNNKNNIYKNKCDDNNNNIVINDVILDNTYKYIIYFIDKKIYDNAIKSINDMVDKAQKYESIWLQYKTLWQIEIGDIISSFGEDIETWKIFMNEIKQTENTFDTLDTEKYFGPIVIDYRILQSKVSSKFEIWQKEIVSEFSKKLGEKTLYLKEEIEKALYDLNTQSELKNETEITAMHILSMTPKDIVGIMNTYDMDILSKTCNSIYNFIEKINEINKKEELEWSKKCDLLKQSEVLLEKQRYTFPTNWLYIDNIIGKLETVKQICKYQIKLIKDYLPYIQSMVLDFDRKVQNNIKELFEEWNKNKPSHGNANSTKALQIITTFEERIDIINEQYEISEKIRKLLELENSESEIGFHVSPNILKEEINCVKGIWDELKIIYSNICDMKKMLWSNVDPKDVKHRLNNLLESIKKIPAKYRQYEIFDNVQNEIQQYLKTYSLLLDLKSESLKERHWKLILQKLNIKIYYNKLTLGNLWSLHLCIHENVLSEILNQAQGEMALEQFLRGLKDTWNEYELELVQYQNKCKLIKGWNDIFSTIDDHLNAIQSMKISSYIKIFEEETFTWDDKLNRLRNLLDVWMNVQRKWVYLEGVLKGSSDIKSLLPQEYNRFKIIDSDFINIMKKTSDKPKLLELFQMEGFQKQLDRLSDSLSKIQKALGEYLEKQRNKFPRFYFVGDEDLLEMIGNSKDAKIIQRNVNKMFAGINSFILKENTNDIILGMSSREGEEVLFLEALNISSFNTLKEWLIVLEKSMKSSLEFYLDEAAKEILEMDMIECTKIENNKILLWSEKYPNQIILLCLQILWTTNIENELINFSKNPPDESNTLFHKSEKICLNLLEFLAVNVVKQKDHRTRQKFVQMITELVHQRDVIRILIDKNVNNVNSFIWLQYMRYYWDSKKKENKINLIIKMADATFEYGYEYLGMCEKLVQTELTDACFLTLTQALKMKLGGNPFGPAGTGKTESVKALGAQLGRYVLVFNCDESFDFTAMGRIFVGLCQVGAWGCFDEFNRLEERILSAVSEQILTIQTSLVQRKNEIEILNKKIGLNKNVGIFVTMNPGYAGRSNLPDNLKQLFRSFAMIEPNKQLIVEVTLFSQGFISAEHLSSKIVSLFDLCSEQLSKQPHYDFGLRSLKSVLNSAGNLKRLTLLKDESKYVQNNQIGFNETLDNNNNNDNNNERKTTTNTNESNIISMEQTLLLKSVCDTVYPKLVSSDIILIQSLLKGVFPNVNVGDLEEKGLINEIHRLCKLRHFTPEEKWITKICQIYQIMKLQHGVMLVGDVGTGKSSAWKILLDSLEALDNIKGVSYVIDAKSLDKEEIYGKLDNINLEWTDGVFTGILRKIIYNSSTQSGNTNKRHWIVFDGDVDPEWAENLNSVLDDNKLLTLPNGERLPIPESVRILFEVDTLKHATLATVSRCGMIWFSRDILSPIILFKHKLNMLKYGDNDYPRKMDKFKLLLINNNERITEKNQNGNENGNENEKKNINIINNNNSNNSNNIYSMNHMNNYNVNANEHNLQQFDNIDSENIMDNIRMNSRIFFEENEQETSSSYIIRTIPYRAVNIISDYFEENEFVHQCLVEAENYEHVMDYEYIRVIESTCLLLQKGFDNLVKKNEKINNTLSDDDIEKYISKWLVVSILWGIGGSLNLETREKFSMFVQSICSIPLPNDLLSKGKMPNMDNTNKISNTLLDYQPNIEDGEWINWKELVQIIDVDRTEISDATLVIETMDTIRHETILEGWLHLKKPFILCGPPGSGKTMTLTSVLKKSSEFDIASLNFSSGSLPNLLLQTFDHYCEYVKTTSELVLRPLQPGKWLIIFADEINLPTPDKYDTQRIIMFMRQIYESQGFWKYDVNNNSWNWVKIERITFAGACNPPTDAGRNPLSNRFLRHTSVLYVDFPGYESLKQIYGTFNRAILRKFPQSSHMADNLTQAMVDFYTKFSETFTIDMQPHYIYSPRELTRWKLALYETLESCDELKTKDLVRLCICEGLRIFQDRLIYKKEKKETDKIIDDIFKYSFPDITKEDLLRPILFNSYMKNYYTEIDKKDLKVLILSKLKIFNEEEINVQLVLFDDVLDHITRIDRVLRLPLGHLLLVGASGAGKTILSRFVSWINGLSVFQIRAGRNYTTESFEADLRHIMKRAGIKEEKITFIFDESNVLGPAFLERMNALLASGEVPGLFEGDNYITLINECKSAYRSNIGLDESDIFKKFTKQVQQNLHIVFTMNPANPDFANRQATSPALFNRCVIDWFGDWPYSALLQVASEFIFNLILPDNNFYMDYVGNEDGPIKGKIQYKNNKAYFLSRAIVEIHNSVVHINNVLMKKGNRYNYMTPRDFLDFIKHFLKIIDEKKEEVSSQKNHLNSGLNKLKDTEIQVAELRNSLAIKKKTLAEKDLEAEEKMKLMIEQQTETEDKKKKAEILSKKLDEQFIIIDQRKEVVRKELSEVEPKFREAEEAVKNIPKKNFDELRAMANPPILVRNAVEAVAILIMNEGDKNVTWEDARKIMKGQDFINKVLYLDKKAVKPQTSSQIKKRINNNDWDVERINKASRAAGPLAKWVESVITFLNILETVQPLEKEIEKLQEETKVAEDQYNEQRDIICELEKKLVQYKNDYAQLISQVQNIKQEMEMVENKIKRSINLIDNLKSEKERWSETFINLEEASETFVGDCLIAAAFCAYIGFFEHYERQRLKRTWGEIIKMHYIKYRNDLSFIEFLSRPSERLQWIGNELPSDDLSIENAIIINNYIRYPMIIDPSDQATTFLLNQYSDKKILKTSFSDKNFIKNLESALRFGSTLLVYDVEKIDAILNSVLNQETHKQGGRLLITIGDSEVDFSPSFNLFLTSRDAHFQFTPDLCSRVTFVNFTLTPSSLQNQCLNMILKNERPDIDKKRCDLLKLQGEYKVKIRELEESLLLELSNVKGNILDDDNVISTMEKLKVQGAEASKEVNIAEEVMVEVENVSNQYLFLAQGSARIYFILQHLCNINFLYQYDLNFFFNIMKDMFNNDHLLSIVKKKDHYKERLKVLEDLLFSLTYNRVARGLLQEDRYVFGLQLCYVKSIINPNIDMDQSYLHYLLKDHYSNQEIDEFEHKKIEKNLLPEYNDEQINALNNLIKHKSFSNLKKCILNNKQKWIELLHSAEPEELVCSILNDMNMSEESMDKSDEMLNKNKNLNILNNVEFGKDDDIPEEKRYINNDNTNMDTTTKNNNNMNNNNNMNNNNNYMLQNKNDISSCLKESLIIKAIRPDKLENCFNKIINHILGRDFLWIPELSMNDFEKYVKENANGNIPIVLISSPGFDPSNKVQQLSEKCKIPLFSIAMGSEEGYISAERVIFTAQSNGGWVLLKNIHISTKWLHELEKNIHKATTNKNFRLFLTMEFNPRIPQSLMRISLTFMFEPPVGIKFSILRSFSLFLENRELCEPKIARLRLYFIVSYLHAIILERRRYTPIGWTKKYEFSDSDLMCALSVVDSWLDKASTKIGKNVSEHIDPCNIPWEAIKKILNEAIYGGRLDNMVDQKILDTFIDHLMNSNSFETDFKLNICNSTSLNKDFLVSPDLFRNINDYINWTNNMSNTDLPAWLGFGQQAEGLLTTRTNFSIISKWNILYSKSRSDVYEPLPHSPLTKSLNEEKYISFEQYKIKNIKEKTIKDKDKNKDEDKNKNKENDDNNKKHIGNNKLVISSSERTESETSESSCTVSRSIHVYSNNENILFINKILENLPQNIPCLEKNEEKLRNAVFRCFERENNLFSDLLKLIKTNLNQLKNVLEEKVKYTNKIRALAKDLNSFNVPSNWLLDGNTTNLNLTNWLKELINRLYQIIVITLEFNEKSCIDINEKKKQKNINIENNEDHNLNDFYKRNNDNILSHFKLNNKEKKLSINFIWLGGLFYPRAFITATRQLSAFKFKNSLDDLELSVLIGNNNNMKYDDMIHFTITCLSIEGAEWSNKDNCLILSDELTIDLPPVTLTWEKKEILKQKQKESSSSLHFMNLPIYLDKSRNSFIGFWNFPVSKGISEQIWYQRGVAIFLSKTY</sequence>
<organism>
    <name type="scientific">Plasmodium falciparum (isolate 3D7)</name>
    <dbReference type="NCBI Taxonomy" id="36329"/>
    <lineage>
        <taxon>Eukaryota</taxon>
        <taxon>Sar</taxon>
        <taxon>Alveolata</taxon>
        <taxon>Apicomplexa</taxon>
        <taxon>Aconoidasida</taxon>
        <taxon>Haemosporida</taxon>
        <taxon>Plasmodiidae</taxon>
        <taxon>Plasmodium</taxon>
        <taxon>Plasmodium (Laverania)</taxon>
    </lineage>
</organism>
<feature type="chain" id="PRO_0000356828" description="Dynein heavy chain-like protein 1">
    <location>
        <begin position="1"/>
        <end position="5065"/>
    </location>
</feature>
<feature type="region of interest" description="Stem" evidence="2">
    <location>
        <begin position="1"/>
        <end position="1957"/>
    </location>
</feature>
<feature type="region of interest" description="AAA 1" evidence="2">
    <location>
        <begin position="1958"/>
        <end position="2179"/>
    </location>
</feature>
<feature type="region of interest" description="Disordered" evidence="4">
    <location>
        <begin position="2203"/>
        <end position="2223"/>
    </location>
</feature>
<feature type="region of interest" description="AAA 2" evidence="1">
    <location>
        <begin position="2281"/>
        <end position="2632"/>
    </location>
</feature>
<feature type="region of interest" description="Disordered" evidence="4">
    <location>
        <begin position="2507"/>
        <end position="2529"/>
    </location>
</feature>
<feature type="region of interest" description="AAA 3" evidence="1">
    <location>
        <begin position="2751"/>
        <end position="3004"/>
    </location>
</feature>
<feature type="region of interest" description="AAA 4" evidence="1">
    <location>
        <begin position="3097"/>
        <end position="3367"/>
    </location>
</feature>
<feature type="region of interest" description="Stalk" evidence="1">
    <location>
        <begin position="3386"/>
        <end position="3701"/>
    </location>
</feature>
<feature type="region of interest" description="AAA 5" evidence="1">
    <location>
        <begin position="3754"/>
        <end position="3983"/>
    </location>
</feature>
<feature type="region of interest" description="AAA 6" evidence="1">
    <location>
        <begin position="4289"/>
        <end position="4507"/>
    </location>
</feature>
<feature type="region of interest" description="Disordered" evidence="4">
    <location>
        <begin position="4686"/>
        <end position="4727"/>
    </location>
</feature>
<feature type="coiled-coil region" evidence="3">
    <location>
        <begin position="1677"/>
        <end position="1705"/>
    </location>
</feature>
<feature type="coiled-coil region" evidence="3">
    <location>
        <begin position="3388"/>
        <end position="3466"/>
    </location>
</feature>
<feature type="coiled-coil region" evidence="3">
    <location>
        <begin position="3970"/>
        <end position="3997"/>
    </location>
</feature>
<feature type="compositionally biased region" description="Low complexity" evidence="4">
    <location>
        <begin position="2204"/>
        <end position="2215"/>
    </location>
</feature>
<feature type="compositionally biased region" description="Basic and acidic residues" evidence="4">
    <location>
        <begin position="4686"/>
        <end position="4705"/>
    </location>
</feature>
<feature type="binding site" evidence="3">
    <location>
        <begin position="1996"/>
        <end position="2003"/>
    </location>
    <ligand>
        <name>ATP</name>
        <dbReference type="ChEBI" id="CHEBI:30616"/>
    </ligand>
</feature>
<feature type="binding site" evidence="3">
    <location>
        <begin position="2319"/>
        <end position="2326"/>
    </location>
    <ligand>
        <name>ATP</name>
        <dbReference type="ChEBI" id="CHEBI:30616"/>
    </ligand>
</feature>
<feature type="binding site" evidence="3">
    <location>
        <begin position="2790"/>
        <end position="2797"/>
    </location>
    <ligand>
        <name>ATP</name>
        <dbReference type="ChEBI" id="CHEBI:30616"/>
    </ligand>
</feature>
<feature type="binding site" evidence="3">
    <location>
        <begin position="3135"/>
        <end position="3142"/>
    </location>
    <ligand>
        <name>ATP</name>
        <dbReference type="ChEBI" id="CHEBI:30616"/>
    </ligand>
</feature>
<protein>
    <recommendedName>
        <fullName evidence="6">Dynein heavy chain-like protein 1</fullName>
    </recommendedName>
</protein>
<comment type="function">
    <text evidence="1">Acts as a motor for the intracellular retrograde motility of vesicles and organelles along microtubules. Dynein has ATPase activity; the force-producing power stroke is thought to occur on release of ADP (By similarity).</text>
</comment>
<comment type="subunit">
    <text evidence="1">Consists of at least two heavy chains and a number of intermediate and light chains.</text>
</comment>
<comment type="subcellular location">
    <subcellularLocation>
        <location evidence="1">Cytoplasm</location>
        <location evidence="1">Cytoskeleton</location>
    </subcellularLocation>
</comment>
<comment type="developmental stage">
    <text evidence="5">Expressed during the asexual cell-cycle on the cell surface of the host erythrocytes.</text>
</comment>
<comment type="domain">
    <text evidence="6">Dynein heavy chains probably consist of an N-terminal stem (which binds cargo and interacts with other dynein components), and the head or motor domain. The motor contains six tandemly-linked AAA domains in the head, which form a ring. A stalk-like structure (formed by two of the coiled coil domains) protrudes between AAA 4 and AAA 5 and terminates in a microtubule-binding site. A seventh domain may also contribute to this ring; it is not clear whether the N-terminus or the C-terminus forms this extra domain. There are four well-conserved and two non-conserved ATPase sites, one per AAA domain. Probably only one of these (within AAA 1) actually hydrolyzes ATP, the others may serve a regulatory function.</text>
</comment>
<comment type="biotechnology">
    <text evidence="5">Possible candidate for an effective malaria vaccine as determined by epitope response in sera.</text>
</comment>
<comment type="similarity">
    <text evidence="3">Belongs to the dynein heavy chain family.</text>
</comment>
<keyword id="KW-0067">ATP-binding</keyword>
<keyword id="KW-0175">Coiled coil</keyword>
<keyword id="KW-0963">Cytoplasm</keyword>
<keyword id="KW-0206">Cytoskeleton</keyword>
<keyword id="KW-0243">Dynein</keyword>
<keyword id="KW-0477">Merozoite</keyword>
<keyword id="KW-0493">Microtubule</keyword>
<keyword id="KW-0505">Motor protein</keyword>
<keyword id="KW-0547">Nucleotide-binding</keyword>
<keyword id="KW-1185">Reference proteome</keyword>
<name>DYHC1_PLAF7</name>